<sequence length="312" mass="32872">MRIAFLGTPAFAVAALDALDWAGHALVTVVAQPDRPAGRGQALREPATKAWARARGVPVLQPEKVRDGTLAAALRALAPDALVVAAYGRILGKDLLTLAPHGAINVHGSLLPRWRGAAPIQWAVAEGERETGVTIMQMDEGLDTGDVLLQRALEIREDDTSETLAPRLAALGGEALVEALRLLEAGAIVPVRQDAAQATLARILEKEDGRIAWTSPARRVSDRLRGFTPWPGAFTTLEGRTLKVLEARPGADAEAPAGEPGEAEVVPGRGLAVACGGGTALLVTRVQLEGRPAQSALDLANGLRRKRFRLGT</sequence>
<organism>
    <name type="scientific">Anaeromyxobacter sp. (strain K)</name>
    <dbReference type="NCBI Taxonomy" id="447217"/>
    <lineage>
        <taxon>Bacteria</taxon>
        <taxon>Pseudomonadati</taxon>
        <taxon>Myxococcota</taxon>
        <taxon>Myxococcia</taxon>
        <taxon>Myxococcales</taxon>
        <taxon>Cystobacterineae</taxon>
        <taxon>Anaeromyxobacteraceae</taxon>
        <taxon>Anaeromyxobacter</taxon>
    </lineage>
</organism>
<feature type="chain" id="PRO_1000098374" description="Methionyl-tRNA formyltransferase">
    <location>
        <begin position="1"/>
        <end position="312"/>
    </location>
</feature>
<feature type="binding site" evidence="1">
    <location>
        <begin position="109"/>
        <end position="112"/>
    </location>
    <ligand>
        <name>(6S)-5,6,7,8-tetrahydrofolate</name>
        <dbReference type="ChEBI" id="CHEBI:57453"/>
    </ligand>
</feature>
<gene>
    <name evidence="1" type="primary">fmt</name>
    <name type="ordered locus">AnaeK_4080</name>
</gene>
<accession>B4UGK3</accession>
<reference key="1">
    <citation type="submission" date="2008-08" db="EMBL/GenBank/DDBJ databases">
        <title>Complete sequence of Anaeromyxobacter sp. K.</title>
        <authorList>
            <consortium name="US DOE Joint Genome Institute"/>
            <person name="Lucas S."/>
            <person name="Copeland A."/>
            <person name="Lapidus A."/>
            <person name="Glavina del Rio T."/>
            <person name="Dalin E."/>
            <person name="Tice H."/>
            <person name="Bruce D."/>
            <person name="Goodwin L."/>
            <person name="Pitluck S."/>
            <person name="Saunders E."/>
            <person name="Brettin T."/>
            <person name="Detter J.C."/>
            <person name="Han C."/>
            <person name="Larimer F."/>
            <person name="Land M."/>
            <person name="Hauser L."/>
            <person name="Kyrpides N."/>
            <person name="Ovchinnikiva G."/>
            <person name="Beliaev A."/>
        </authorList>
    </citation>
    <scope>NUCLEOTIDE SEQUENCE [LARGE SCALE GENOMIC DNA]</scope>
    <source>
        <strain>K</strain>
    </source>
</reference>
<evidence type="ECO:0000255" key="1">
    <source>
        <dbReference type="HAMAP-Rule" id="MF_00182"/>
    </source>
</evidence>
<keyword id="KW-0648">Protein biosynthesis</keyword>
<keyword id="KW-0808">Transferase</keyword>
<proteinExistence type="inferred from homology"/>
<comment type="function">
    <text evidence="1">Attaches a formyl group to the free amino group of methionyl-tRNA(fMet). The formyl group appears to play a dual role in the initiator identity of N-formylmethionyl-tRNA by promoting its recognition by IF2 and preventing the misappropriation of this tRNA by the elongation apparatus.</text>
</comment>
<comment type="catalytic activity">
    <reaction evidence="1">
        <text>L-methionyl-tRNA(fMet) + (6R)-10-formyltetrahydrofolate = N-formyl-L-methionyl-tRNA(fMet) + (6S)-5,6,7,8-tetrahydrofolate + H(+)</text>
        <dbReference type="Rhea" id="RHEA:24380"/>
        <dbReference type="Rhea" id="RHEA-COMP:9952"/>
        <dbReference type="Rhea" id="RHEA-COMP:9953"/>
        <dbReference type="ChEBI" id="CHEBI:15378"/>
        <dbReference type="ChEBI" id="CHEBI:57453"/>
        <dbReference type="ChEBI" id="CHEBI:78530"/>
        <dbReference type="ChEBI" id="CHEBI:78844"/>
        <dbReference type="ChEBI" id="CHEBI:195366"/>
        <dbReference type="EC" id="2.1.2.9"/>
    </reaction>
</comment>
<comment type="similarity">
    <text evidence="1">Belongs to the Fmt family.</text>
</comment>
<dbReference type="EC" id="2.1.2.9" evidence="1"/>
<dbReference type="EMBL" id="CP001131">
    <property type="protein sequence ID" value="ACG75285.1"/>
    <property type="molecule type" value="Genomic_DNA"/>
</dbReference>
<dbReference type="RefSeq" id="WP_012528038.1">
    <property type="nucleotide sequence ID" value="NC_011145.1"/>
</dbReference>
<dbReference type="SMR" id="B4UGK3"/>
<dbReference type="KEGG" id="ank:AnaeK_4080"/>
<dbReference type="HOGENOM" id="CLU_033347_2_0_7"/>
<dbReference type="OrthoDB" id="9802815at2"/>
<dbReference type="Proteomes" id="UP000001871">
    <property type="component" value="Chromosome"/>
</dbReference>
<dbReference type="GO" id="GO:0005829">
    <property type="term" value="C:cytosol"/>
    <property type="evidence" value="ECO:0007669"/>
    <property type="project" value="TreeGrafter"/>
</dbReference>
<dbReference type="GO" id="GO:0004479">
    <property type="term" value="F:methionyl-tRNA formyltransferase activity"/>
    <property type="evidence" value="ECO:0007669"/>
    <property type="project" value="UniProtKB-UniRule"/>
</dbReference>
<dbReference type="CDD" id="cd08646">
    <property type="entry name" value="FMT_core_Met-tRNA-FMT_N"/>
    <property type="match status" value="1"/>
</dbReference>
<dbReference type="CDD" id="cd08704">
    <property type="entry name" value="Met_tRNA_FMT_C"/>
    <property type="match status" value="1"/>
</dbReference>
<dbReference type="Gene3D" id="3.10.25.10">
    <property type="entry name" value="Formyl transferase, C-terminal domain"/>
    <property type="match status" value="1"/>
</dbReference>
<dbReference type="Gene3D" id="3.40.50.170">
    <property type="entry name" value="Formyl transferase, N-terminal domain"/>
    <property type="match status" value="1"/>
</dbReference>
<dbReference type="HAMAP" id="MF_00182">
    <property type="entry name" value="Formyl_trans"/>
    <property type="match status" value="1"/>
</dbReference>
<dbReference type="InterPro" id="IPR005794">
    <property type="entry name" value="Fmt"/>
</dbReference>
<dbReference type="InterPro" id="IPR005793">
    <property type="entry name" value="Formyl_trans_C"/>
</dbReference>
<dbReference type="InterPro" id="IPR037022">
    <property type="entry name" value="Formyl_trans_C_sf"/>
</dbReference>
<dbReference type="InterPro" id="IPR002376">
    <property type="entry name" value="Formyl_transf_N"/>
</dbReference>
<dbReference type="InterPro" id="IPR036477">
    <property type="entry name" value="Formyl_transf_N_sf"/>
</dbReference>
<dbReference type="InterPro" id="IPR011034">
    <property type="entry name" value="Formyl_transferase-like_C_sf"/>
</dbReference>
<dbReference type="InterPro" id="IPR001555">
    <property type="entry name" value="GART_AS"/>
</dbReference>
<dbReference type="InterPro" id="IPR044135">
    <property type="entry name" value="Met-tRNA-FMT_C"/>
</dbReference>
<dbReference type="InterPro" id="IPR041711">
    <property type="entry name" value="Met-tRNA-FMT_N"/>
</dbReference>
<dbReference type="NCBIfam" id="TIGR00460">
    <property type="entry name" value="fmt"/>
    <property type="match status" value="1"/>
</dbReference>
<dbReference type="PANTHER" id="PTHR11138">
    <property type="entry name" value="METHIONYL-TRNA FORMYLTRANSFERASE"/>
    <property type="match status" value="1"/>
</dbReference>
<dbReference type="PANTHER" id="PTHR11138:SF5">
    <property type="entry name" value="METHIONYL-TRNA FORMYLTRANSFERASE, MITOCHONDRIAL"/>
    <property type="match status" value="1"/>
</dbReference>
<dbReference type="Pfam" id="PF02911">
    <property type="entry name" value="Formyl_trans_C"/>
    <property type="match status" value="1"/>
</dbReference>
<dbReference type="Pfam" id="PF00551">
    <property type="entry name" value="Formyl_trans_N"/>
    <property type="match status" value="1"/>
</dbReference>
<dbReference type="SUPFAM" id="SSF50486">
    <property type="entry name" value="FMT C-terminal domain-like"/>
    <property type="match status" value="1"/>
</dbReference>
<dbReference type="SUPFAM" id="SSF53328">
    <property type="entry name" value="Formyltransferase"/>
    <property type="match status" value="1"/>
</dbReference>
<dbReference type="PROSITE" id="PS00373">
    <property type="entry name" value="GART"/>
    <property type="match status" value="1"/>
</dbReference>
<protein>
    <recommendedName>
        <fullName evidence="1">Methionyl-tRNA formyltransferase</fullName>
        <ecNumber evidence="1">2.1.2.9</ecNumber>
    </recommendedName>
</protein>
<name>FMT_ANASK</name>